<comment type="function">
    <text evidence="2">DNA ligase involved in DNA non-homologous end joining (NHEJ); required for double-strand break (DSB) repair.</text>
</comment>
<comment type="catalytic activity">
    <reaction evidence="5">
        <text>ATP + (deoxyribonucleotide)n-3'-hydroxyl + 5'-phospho-(deoxyribonucleotide)m = (deoxyribonucleotide)n+m + AMP + diphosphate.</text>
        <dbReference type="EC" id="6.5.1.1"/>
    </reaction>
</comment>
<comment type="cofactor">
    <cofactor evidence="1">
        <name>Mg(2+)</name>
        <dbReference type="ChEBI" id="CHEBI:18420"/>
    </cofactor>
</comment>
<comment type="subcellular location">
    <subcellularLocation>
        <location evidence="2">Nucleus</location>
    </subcellularLocation>
</comment>
<comment type="similarity">
    <text evidence="7">Belongs to the ATP-dependent DNA ligase family.</text>
</comment>
<name>DNLI4_COCIM</name>
<gene>
    <name type="primary">LIG4</name>
    <name type="ORF">CIMG_09216</name>
</gene>
<keyword id="KW-0067">ATP-binding</keyword>
<keyword id="KW-0227">DNA damage</keyword>
<keyword id="KW-0233">DNA recombination</keyword>
<keyword id="KW-0234">DNA repair</keyword>
<keyword id="KW-0436">Ligase</keyword>
<keyword id="KW-0460">Magnesium</keyword>
<keyword id="KW-0479">Metal-binding</keyword>
<keyword id="KW-0547">Nucleotide-binding</keyword>
<keyword id="KW-0539">Nucleus</keyword>
<keyword id="KW-1185">Reference proteome</keyword>
<keyword id="KW-0677">Repeat</keyword>
<protein>
    <recommendedName>
        <fullName>DNA ligase 4</fullName>
        <ecNumber evidence="2">6.5.1.1</ecNumber>
    </recommendedName>
    <alternativeName>
        <fullName>DNA ligase IV</fullName>
    </alternativeName>
    <alternativeName>
        <fullName>Polydeoxyribonucleotide synthase [ATP] 4</fullName>
    </alternativeName>
</protein>
<organism>
    <name type="scientific">Coccidioides immitis (strain RS)</name>
    <name type="common">Valley fever fungus</name>
    <dbReference type="NCBI Taxonomy" id="246410"/>
    <lineage>
        <taxon>Eukaryota</taxon>
        <taxon>Fungi</taxon>
        <taxon>Dikarya</taxon>
        <taxon>Ascomycota</taxon>
        <taxon>Pezizomycotina</taxon>
        <taxon>Eurotiomycetes</taxon>
        <taxon>Eurotiomycetidae</taxon>
        <taxon>Onygenales</taxon>
        <taxon>Onygenaceae</taxon>
        <taxon>Coccidioides</taxon>
    </lineage>
</organism>
<feature type="chain" id="PRO_0000278379" description="DNA ligase 4">
    <location>
        <begin position="1"/>
        <end position="985"/>
    </location>
</feature>
<feature type="domain" description="BRCT 1" evidence="4">
    <location>
        <begin position="711"/>
        <end position="804"/>
    </location>
</feature>
<feature type="domain" description="BRCT 2" evidence="4">
    <location>
        <begin position="878"/>
        <end position="983"/>
    </location>
</feature>
<feature type="region of interest" description="Disordered" evidence="6">
    <location>
        <begin position="1"/>
        <end position="27"/>
    </location>
</feature>
<feature type="region of interest" description="Disordered" evidence="6">
    <location>
        <begin position="43"/>
        <end position="70"/>
    </location>
</feature>
<feature type="compositionally biased region" description="Basic and acidic residues" evidence="6">
    <location>
        <begin position="10"/>
        <end position="20"/>
    </location>
</feature>
<feature type="compositionally biased region" description="Basic residues" evidence="6">
    <location>
        <begin position="46"/>
        <end position="61"/>
    </location>
</feature>
<feature type="active site" description="N6-AMP-lysine intermediate" evidence="5">
    <location>
        <position position="312"/>
    </location>
</feature>
<feature type="binding site" evidence="1">
    <location>
        <position position="310"/>
    </location>
    <ligand>
        <name>ATP</name>
        <dbReference type="ChEBI" id="CHEBI:30616"/>
    </ligand>
</feature>
<feature type="binding site" evidence="1">
    <location>
        <position position="312"/>
    </location>
    <ligand>
        <name>ATP</name>
        <dbReference type="ChEBI" id="CHEBI:30616"/>
    </ligand>
</feature>
<feature type="binding site" evidence="1">
    <location>
        <position position="313"/>
    </location>
    <ligand>
        <name>ATP</name>
        <dbReference type="ChEBI" id="CHEBI:30616"/>
    </ligand>
</feature>
<feature type="binding site" evidence="1">
    <location>
        <position position="317"/>
    </location>
    <ligand>
        <name>ATP</name>
        <dbReference type="ChEBI" id="CHEBI:30616"/>
    </ligand>
</feature>
<feature type="binding site" evidence="1">
    <location>
        <position position="379"/>
    </location>
    <ligand>
        <name>ATP</name>
        <dbReference type="ChEBI" id="CHEBI:30616"/>
    </ligand>
</feature>
<feature type="binding site" evidence="3">
    <location>
        <position position="379"/>
    </location>
    <ligand>
        <name>Mg(2+)</name>
        <dbReference type="ChEBI" id="CHEBI:18420"/>
        <label>1</label>
    </ligand>
</feature>
<feature type="binding site" evidence="1">
    <location>
        <position position="420"/>
    </location>
    <ligand>
        <name>ATP</name>
        <dbReference type="ChEBI" id="CHEBI:30616"/>
    </ligand>
</feature>
<feature type="binding site" evidence="1">
    <location>
        <position position="480"/>
    </location>
    <ligand>
        <name>ATP</name>
        <dbReference type="ChEBI" id="CHEBI:30616"/>
    </ligand>
</feature>
<feature type="binding site" evidence="3">
    <location>
        <position position="480"/>
    </location>
    <ligand>
        <name>Mg(2+)</name>
        <dbReference type="ChEBI" id="CHEBI:18420"/>
        <label>2</label>
    </ligand>
</feature>
<feature type="binding site" evidence="1">
    <location>
        <position position="485"/>
    </location>
    <ligand>
        <name>ATP</name>
        <dbReference type="ChEBI" id="CHEBI:30616"/>
    </ligand>
</feature>
<feature type="binding site" evidence="1">
    <location>
        <position position="502"/>
    </location>
    <ligand>
        <name>ATP</name>
        <dbReference type="ChEBI" id="CHEBI:30616"/>
    </ligand>
</feature>
<feature type="binding site" evidence="1">
    <location>
        <position position="504"/>
    </location>
    <ligand>
        <name>ATP</name>
        <dbReference type="ChEBI" id="CHEBI:30616"/>
    </ligand>
</feature>
<reference key="1">
    <citation type="journal article" date="2009" name="Genome Res.">
        <title>Comparative genomic analyses of the human fungal pathogens Coccidioides and their relatives.</title>
        <authorList>
            <person name="Sharpton T.J."/>
            <person name="Stajich J.E."/>
            <person name="Rounsley S.D."/>
            <person name="Gardner M.J."/>
            <person name="Wortman J.R."/>
            <person name="Jordar V.S."/>
            <person name="Maiti R."/>
            <person name="Kodira C.D."/>
            <person name="Neafsey D.E."/>
            <person name="Zeng Q."/>
            <person name="Hung C.-Y."/>
            <person name="McMahan C."/>
            <person name="Muszewska A."/>
            <person name="Grynberg M."/>
            <person name="Mandel M.A."/>
            <person name="Kellner E.M."/>
            <person name="Barker B.M."/>
            <person name="Galgiani J.N."/>
            <person name="Orbach M.J."/>
            <person name="Kirkland T.N."/>
            <person name="Cole G.T."/>
            <person name="Henn M.R."/>
            <person name="Birren B.W."/>
            <person name="Taylor J.W."/>
        </authorList>
    </citation>
    <scope>NUCLEOTIDE SEQUENCE [LARGE SCALE GENOMIC DNA]</scope>
    <source>
        <strain>RS</strain>
    </source>
</reference>
<reference key="2">
    <citation type="journal article" date="2010" name="Genome Res.">
        <title>Population genomic sequencing of Coccidioides fungi reveals recent hybridization and transposon control.</title>
        <authorList>
            <person name="Neafsey D.E."/>
            <person name="Barker B.M."/>
            <person name="Sharpton T.J."/>
            <person name="Stajich J.E."/>
            <person name="Park D.J."/>
            <person name="Whiston E."/>
            <person name="Hung C.-Y."/>
            <person name="McMahan C."/>
            <person name="White J."/>
            <person name="Sykes S."/>
            <person name="Heiman D."/>
            <person name="Young S."/>
            <person name="Zeng Q."/>
            <person name="Abouelleil A."/>
            <person name="Aftuck L."/>
            <person name="Bessette D."/>
            <person name="Brown A."/>
            <person name="FitzGerald M."/>
            <person name="Lui A."/>
            <person name="Macdonald J.P."/>
            <person name="Priest M."/>
            <person name="Orbach M.J."/>
            <person name="Galgiani J.N."/>
            <person name="Kirkland T.N."/>
            <person name="Cole G.T."/>
            <person name="Birren B.W."/>
            <person name="Henn M.R."/>
            <person name="Taylor J.W."/>
            <person name="Rounsley S.D."/>
        </authorList>
    </citation>
    <scope>GENOME REANNOTATION</scope>
    <source>
        <strain>RS</strain>
    </source>
</reference>
<sequence length="985" mass="112847">MDRLNNVGGETERELDEKYPNRPRNKHSTLPFHDLFLTLFNPLNGNKKRPTGPAAARKKLGPHGGQQTLSPQELRRDIIQRFISRWRKEVGNDIYPAFRLIIPEKDRDRAMYGLKEKTIGKLLVKIMKIDKNSEDGFNLLNWKLPGQSMASRMAGDFAGRCYEVISKRPIRTDVGNMTIQEVNDKLDVLAATSKEDEQIPVLEEFYRNMNPEELMWLIRIILRQMKVGATERTFFEIWHPDAESLFSISSSLRRVCWELYDPNVRLEADEARVTLMQCFQPQLAQFQMHSFPKMIERMRLSPDDPTFWIEEKLDGERIQLHMMSDDSIPGGKRFGFWSRKAKDYTYLYGNGFYDENGALTRHLKDAFADGVDNIILDGEMITWDPEQDAPLPFGTLKTAALSEQRNPFSATGQRPLFRIFDILYLNDKALTRYTLRDRRRALEASIKPVHRRLEVHTYEIGNSAADIEPQLRKVVAEASEGLVLKNPNSPYRLNDRHDDWMKVKPEYMTEFGESLDCVVIGGYYGSGKRGGGLASFLCGLRVDEAQVRQGASPMKCYSFLKVGGGFTAPDYANIRHHTDGKWKDWNPKKPPTEFIELAGGDAQYERPDVWIRPDESVVLCVKAASVTPSDQFRLGLTVRFPRFKRLRMDKDWKSALSIQEFMDLKANAEREQKEKEFKIDNSRRKRAKRAVKKPLTIAGYDESKRAGFTGPSGHVFEGMNFFVITDSVEPEKKSKLELEQLIKANGGKIYQTHTAAPNTLCIAERRTVKVASVQKVAKESIIRPSWLFDCIKQNEVDKGLPDLLIPFEPRHMYFTVKSQEEEIARHVDEYSDSYARDITPNELSKLLVSMPLIPNLPPPHISKTETQIQERESTFQELRGWLFKNQVLHFVKRRSDSMLSLPLRLASNLARFAGASVANELEDKSITHVVIDTDSQPADVSALRSAISKRVAAGRRIPHLVTIAWIQDSWKAESLLDEERFAPTA</sequence>
<accession>Q1DKE7</accession>
<accession>J3K2J9</accession>
<evidence type="ECO:0000250" key="1">
    <source>
        <dbReference type="UniProtKB" id="P49917"/>
    </source>
</evidence>
<evidence type="ECO:0000250" key="2">
    <source>
        <dbReference type="UniProtKB" id="Q08387"/>
    </source>
</evidence>
<evidence type="ECO:0000255" key="3"/>
<evidence type="ECO:0000255" key="4">
    <source>
        <dbReference type="PROSITE-ProRule" id="PRU00033"/>
    </source>
</evidence>
<evidence type="ECO:0000255" key="5">
    <source>
        <dbReference type="PROSITE-ProRule" id="PRU10135"/>
    </source>
</evidence>
<evidence type="ECO:0000256" key="6">
    <source>
        <dbReference type="SAM" id="MobiDB-lite"/>
    </source>
</evidence>
<evidence type="ECO:0000305" key="7"/>
<proteinExistence type="inferred from homology"/>
<dbReference type="EC" id="6.5.1.1" evidence="2"/>
<dbReference type="EMBL" id="GG704915">
    <property type="protein sequence ID" value="EAS28012.3"/>
    <property type="molecule type" value="Genomic_DNA"/>
</dbReference>
<dbReference type="RefSeq" id="XP_001239595.1">
    <property type="nucleotide sequence ID" value="XM_001239594.2"/>
</dbReference>
<dbReference type="SMR" id="Q1DKE7"/>
<dbReference type="FunCoup" id="Q1DKE7">
    <property type="interactions" value="561"/>
</dbReference>
<dbReference type="STRING" id="246410.Q1DKE7"/>
<dbReference type="GeneID" id="4558489"/>
<dbReference type="KEGG" id="cim:CIMG_09216"/>
<dbReference type="VEuPathDB" id="FungiDB:CIMG_09216"/>
<dbReference type="InParanoid" id="Q1DKE7"/>
<dbReference type="OMA" id="EGIMIKH"/>
<dbReference type="OrthoDB" id="151490at2759"/>
<dbReference type="Proteomes" id="UP000001261">
    <property type="component" value="Unassembled WGS sequence"/>
</dbReference>
<dbReference type="GO" id="GO:0032807">
    <property type="term" value="C:DNA ligase IV complex"/>
    <property type="evidence" value="ECO:0007669"/>
    <property type="project" value="TreeGrafter"/>
</dbReference>
<dbReference type="GO" id="GO:0005524">
    <property type="term" value="F:ATP binding"/>
    <property type="evidence" value="ECO:0007669"/>
    <property type="project" value="UniProtKB-KW"/>
</dbReference>
<dbReference type="GO" id="GO:0003677">
    <property type="term" value="F:DNA binding"/>
    <property type="evidence" value="ECO:0007669"/>
    <property type="project" value="InterPro"/>
</dbReference>
<dbReference type="GO" id="GO:0003910">
    <property type="term" value="F:DNA ligase (ATP) activity"/>
    <property type="evidence" value="ECO:0000250"/>
    <property type="project" value="UniProtKB"/>
</dbReference>
<dbReference type="GO" id="GO:0046872">
    <property type="term" value="F:metal ion binding"/>
    <property type="evidence" value="ECO:0007669"/>
    <property type="project" value="UniProtKB-KW"/>
</dbReference>
<dbReference type="GO" id="GO:0071897">
    <property type="term" value="P:DNA biosynthetic process"/>
    <property type="evidence" value="ECO:0007669"/>
    <property type="project" value="InterPro"/>
</dbReference>
<dbReference type="GO" id="GO:0006310">
    <property type="term" value="P:DNA recombination"/>
    <property type="evidence" value="ECO:0007669"/>
    <property type="project" value="UniProtKB-KW"/>
</dbReference>
<dbReference type="GO" id="GO:0097680">
    <property type="term" value="P:double-strand break repair via classical nonhomologous end joining"/>
    <property type="evidence" value="ECO:0000250"/>
    <property type="project" value="UniProtKB"/>
</dbReference>
<dbReference type="GO" id="GO:0006297">
    <property type="term" value="P:nucleotide-excision repair, DNA gap filling"/>
    <property type="evidence" value="ECO:0007669"/>
    <property type="project" value="TreeGrafter"/>
</dbReference>
<dbReference type="CDD" id="cd07903">
    <property type="entry name" value="Adenylation_DNA_ligase_IV"/>
    <property type="match status" value="1"/>
</dbReference>
<dbReference type="CDD" id="cd17722">
    <property type="entry name" value="BRCT_DNA_ligase_IV_rpt1"/>
    <property type="match status" value="1"/>
</dbReference>
<dbReference type="CDD" id="cd07968">
    <property type="entry name" value="OBF_DNA_ligase_IV"/>
    <property type="match status" value="1"/>
</dbReference>
<dbReference type="FunFam" id="2.40.50.140:FF:000234">
    <property type="entry name" value="DNA ligase"/>
    <property type="match status" value="1"/>
</dbReference>
<dbReference type="FunFam" id="3.30.470.30:FF:000013">
    <property type="entry name" value="DNA ligase"/>
    <property type="match status" value="1"/>
</dbReference>
<dbReference type="FunFam" id="1.10.3260.10:FF:000008">
    <property type="entry name" value="DNA ligase 4"/>
    <property type="match status" value="1"/>
</dbReference>
<dbReference type="Gene3D" id="3.40.50.10190">
    <property type="entry name" value="BRCT domain"/>
    <property type="match status" value="2"/>
</dbReference>
<dbReference type="Gene3D" id="1.10.3260.10">
    <property type="entry name" value="DNA ligase, ATP-dependent, N-terminal domain"/>
    <property type="match status" value="1"/>
</dbReference>
<dbReference type="Gene3D" id="3.30.470.30">
    <property type="entry name" value="DNA ligase/mRNA capping enzyme"/>
    <property type="match status" value="1"/>
</dbReference>
<dbReference type="Gene3D" id="2.40.50.140">
    <property type="entry name" value="Nucleic acid-binding proteins"/>
    <property type="match status" value="1"/>
</dbReference>
<dbReference type="InterPro" id="IPR044125">
    <property type="entry name" value="Adenylation_DNA_ligase_IV"/>
</dbReference>
<dbReference type="InterPro" id="IPR001357">
    <property type="entry name" value="BRCT_dom"/>
</dbReference>
<dbReference type="InterPro" id="IPR036420">
    <property type="entry name" value="BRCT_dom_sf"/>
</dbReference>
<dbReference type="InterPro" id="IPR000977">
    <property type="entry name" value="DNA_ligase_ATP-dep"/>
</dbReference>
<dbReference type="InterPro" id="IPR012309">
    <property type="entry name" value="DNA_ligase_ATP-dep_C"/>
</dbReference>
<dbReference type="InterPro" id="IPR012310">
    <property type="entry name" value="DNA_ligase_ATP-dep_cent"/>
</dbReference>
<dbReference type="InterPro" id="IPR016059">
    <property type="entry name" value="DNA_ligase_ATP-dep_CS"/>
</dbReference>
<dbReference type="InterPro" id="IPR012308">
    <property type="entry name" value="DNA_ligase_ATP-dep_N"/>
</dbReference>
<dbReference type="InterPro" id="IPR036599">
    <property type="entry name" value="DNA_ligase_N_sf"/>
</dbReference>
<dbReference type="InterPro" id="IPR029710">
    <property type="entry name" value="LIG4"/>
</dbReference>
<dbReference type="InterPro" id="IPR012340">
    <property type="entry name" value="NA-bd_OB-fold"/>
</dbReference>
<dbReference type="NCBIfam" id="TIGR00574">
    <property type="entry name" value="dnl1"/>
    <property type="match status" value="1"/>
</dbReference>
<dbReference type="PANTHER" id="PTHR45997">
    <property type="entry name" value="DNA LIGASE 4"/>
    <property type="match status" value="1"/>
</dbReference>
<dbReference type="PANTHER" id="PTHR45997:SF1">
    <property type="entry name" value="DNA LIGASE 4"/>
    <property type="match status" value="1"/>
</dbReference>
<dbReference type="Pfam" id="PF16589">
    <property type="entry name" value="BRCT_2"/>
    <property type="match status" value="1"/>
</dbReference>
<dbReference type="Pfam" id="PF04679">
    <property type="entry name" value="DNA_ligase_A_C"/>
    <property type="match status" value="1"/>
</dbReference>
<dbReference type="Pfam" id="PF01068">
    <property type="entry name" value="DNA_ligase_A_M"/>
    <property type="match status" value="1"/>
</dbReference>
<dbReference type="Pfam" id="PF04675">
    <property type="entry name" value="DNA_ligase_A_N"/>
    <property type="match status" value="1"/>
</dbReference>
<dbReference type="SMART" id="SM00292">
    <property type="entry name" value="BRCT"/>
    <property type="match status" value="2"/>
</dbReference>
<dbReference type="SUPFAM" id="SSF117018">
    <property type="entry name" value="ATP-dependent DNA ligase DNA-binding domain"/>
    <property type="match status" value="1"/>
</dbReference>
<dbReference type="SUPFAM" id="SSF52113">
    <property type="entry name" value="BRCT domain"/>
    <property type="match status" value="2"/>
</dbReference>
<dbReference type="SUPFAM" id="SSF56091">
    <property type="entry name" value="DNA ligase/mRNA capping enzyme, catalytic domain"/>
    <property type="match status" value="1"/>
</dbReference>
<dbReference type="SUPFAM" id="SSF50249">
    <property type="entry name" value="Nucleic acid-binding proteins"/>
    <property type="match status" value="1"/>
</dbReference>
<dbReference type="PROSITE" id="PS50172">
    <property type="entry name" value="BRCT"/>
    <property type="match status" value="2"/>
</dbReference>
<dbReference type="PROSITE" id="PS00697">
    <property type="entry name" value="DNA_LIGASE_A1"/>
    <property type="match status" value="1"/>
</dbReference>
<dbReference type="PROSITE" id="PS50160">
    <property type="entry name" value="DNA_LIGASE_A3"/>
    <property type="match status" value="1"/>
</dbReference>